<evidence type="ECO:0000250" key="1"/>
<evidence type="ECO:0000250" key="2">
    <source>
        <dbReference type="UniProtKB" id="P28659"/>
    </source>
</evidence>
<evidence type="ECO:0000250" key="3">
    <source>
        <dbReference type="UniProtKB" id="Q92879"/>
    </source>
</evidence>
<evidence type="ECO:0000255" key="4">
    <source>
        <dbReference type="PROSITE-ProRule" id="PRU00176"/>
    </source>
</evidence>
<evidence type="ECO:0000256" key="5">
    <source>
        <dbReference type="SAM" id="MobiDB-lite"/>
    </source>
</evidence>
<evidence type="ECO:0000305" key="6"/>
<dbReference type="EMBL" id="BC098012">
    <property type="protein sequence ID" value="AAH98012.1"/>
    <property type="molecule type" value="mRNA"/>
</dbReference>
<dbReference type="RefSeq" id="NP_001020592.1">
    <property type="nucleotide sequence ID" value="NM_001025421.3"/>
</dbReference>
<dbReference type="RefSeq" id="NP_001421249.1">
    <property type="nucleotide sequence ID" value="NM_001434320.1"/>
</dbReference>
<dbReference type="RefSeq" id="XP_006234584.1">
    <property type="nucleotide sequence ID" value="XM_006234522.2"/>
</dbReference>
<dbReference type="RefSeq" id="XP_006234585.1">
    <property type="nucleotide sequence ID" value="XM_006234523.2"/>
</dbReference>
<dbReference type="RefSeq" id="XP_006234586.1">
    <property type="nucleotide sequence ID" value="XM_006234524.2"/>
</dbReference>
<dbReference type="RefSeq" id="XP_008760232.1">
    <property type="nucleotide sequence ID" value="XM_008762010.2"/>
</dbReference>
<dbReference type="RefSeq" id="XP_017447388.1">
    <property type="nucleotide sequence ID" value="XM_017591899.1"/>
</dbReference>
<dbReference type="RefSeq" id="XP_038961348.1">
    <property type="nucleotide sequence ID" value="XM_039105420.2"/>
</dbReference>
<dbReference type="RefSeq" id="XP_038961350.1">
    <property type="nucleotide sequence ID" value="XM_039105422.2"/>
</dbReference>
<dbReference type="RefSeq" id="XP_038961351.1">
    <property type="nucleotide sequence ID" value="XM_039105423.2"/>
</dbReference>
<dbReference type="RefSeq" id="XP_063140215.1">
    <property type="nucleotide sequence ID" value="XM_063284145.1"/>
</dbReference>
<dbReference type="RefSeq" id="XP_063140216.1">
    <property type="nucleotide sequence ID" value="XM_063284146.1"/>
</dbReference>
<dbReference type="BMRB" id="Q4QQT3"/>
<dbReference type="SMR" id="Q4QQT3"/>
<dbReference type="BioGRID" id="263230">
    <property type="interactions" value="1"/>
</dbReference>
<dbReference type="FunCoup" id="Q4QQT3">
    <property type="interactions" value="3838"/>
</dbReference>
<dbReference type="IntAct" id="Q4QQT3">
    <property type="interactions" value="20"/>
</dbReference>
<dbReference type="STRING" id="10116.ENSRNOP00000014484"/>
<dbReference type="iPTMnet" id="Q4QQT3"/>
<dbReference type="PhosphoSitePlus" id="Q4QQT3"/>
<dbReference type="jPOST" id="Q4QQT3"/>
<dbReference type="PaxDb" id="10116-ENSRNOP00000014484"/>
<dbReference type="PeptideAtlas" id="Q4QQT3"/>
<dbReference type="GeneID" id="362160"/>
<dbReference type="KEGG" id="rno:362160"/>
<dbReference type="UCSC" id="RGD:1307721">
    <property type="organism name" value="rat"/>
</dbReference>
<dbReference type="AGR" id="RGD:1307721"/>
<dbReference type="CTD" id="10658"/>
<dbReference type="RGD" id="1307721">
    <property type="gene designation" value="Celf1"/>
</dbReference>
<dbReference type="VEuPathDB" id="HostDB:ENSRNOG00000010379"/>
<dbReference type="eggNOG" id="KOG0144">
    <property type="taxonomic scope" value="Eukaryota"/>
</dbReference>
<dbReference type="HOGENOM" id="CLU_015367_0_2_1"/>
<dbReference type="InParanoid" id="Q4QQT3"/>
<dbReference type="PhylomeDB" id="Q4QQT3"/>
<dbReference type="PRO" id="PR:Q4QQT3"/>
<dbReference type="Proteomes" id="UP000002494">
    <property type="component" value="Chromosome 3"/>
</dbReference>
<dbReference type="Bgee" id="ENSRNOG00000010379">
    <property type="expression patterns" value="Expressed in frontal cortex and 18 other cell types or tissues"/>
</dbReference>
<dbReference type="GO" id="GO:0005737">
    <property type="term" value="C:cytoplasm"/>
    <property type="evidence" value="ECO:0000266"/>
    <property type="project" value="RGD"/>
</dbReference>
<dbReference type="GO" id="GO:0010494">
    <property type="term" value="C:cytoplasmic stress granule"/>
    <property type="evidence" value="ECO:0000266"/>
    <property type="project" value="RGD"/>
</dbReference>
<dbReference type="GO" id="GO:0001673">
    <property type="term" value="C:male germ cell nucleus"/>
    <property type="evidence" value="ECO:0000266"/>
    <property type="project" value="RGD"/>
</dbReference>
<dbReference type="GO" id="GO:0005634">
    <property type="term" value="C:nucleus"/>
    <property type="evidence" value="ECO:0000266"/>
    <property type="project" value="RGD"/>
</dbReference>
<dbReference type="GO" id="GO:0097356">
    <property type="term" value="C:perinucleolar compartment"/>
    <property type="evidence" value="ECO:0000266"/>
    <property type="project" value="RGD"/>
</dbReference>
<dbReference type="GO" id="GO:1990904">
    <property type="term" value="C:ribonucleoprotein complex"/>
    <property type="evidence" value="ECO:0000318"/>
    <property type="project" value="GO_Central"/>
</dbReference>
<dbReference type="GO" id="GO:0042835">
    <property type="term" value="F:BRE binding"/>
    <property type="evidence" value="ECO:0000266"/>
    <property type="project" value="RGD"/>
</dbReference>
<dbReference type="GO" id="GO:0106222">
    <property type="term" value="F:lncRNA binding"/>
    <property type="evidence" value="ECO:0000266"/>
    <property type="project" value="RGD"/>
</dbReference>
<dbReference type="GO" id="GO:0003730">
    <property type="term" value="F:mRNA 3'-UTR binding"/>
    <property type="evidence" value="ECO:0000314"/>
    <property type="project" value="ARUK-UCL"/>
</dbReference>
<dbReference type="GO" id="GO:0003729">
    <property type="term" value="F:mRNA binding"/>
    <property type="evidence" value="ECO:0000266"/>
    <property type="project" value="RGD"/>
</dbReference>
<dbReference type="GO" id="GO:0036002">
    <property type="term" value="F:pre-mRNA binding"/>
    <property type="evidence" value="ECO:0000266"/>
    <property type="project" value="RGD"/>
</dbReference>
<dbReference type="GO" id="GO:0003723">
    <property type="term" value="F:RNA binding"/>
    <property type="evidence" value="ECO:0000250"/>
    <property type="project" value="UniProtKB"/>
</dbReference>
<dbReference type="GO" id="GO:0031369">
    <property type="term" value="F:translation initiation factor binding"/>
    <property type="evidence" value="ECO:0000266"/>
    <property type="project" value="RGD"/>
</dbReference>
<dbReference type="GO" id="GO:1904584">
    <property type="term" value="P:cellular response to polyamine macromolecule"/>
    <property type="evidence" value="ECO:0000270"/>
    <property type="project" value="RGD"/>
</dbReference>
<dbReference type="GO" id="GO:0021987">
    <property type="term" value="P:cerebral cortex development"/>
    <property type="evidence" value="ECO:0000266"/>
    <property type="project" value="RGD"/>
</dbReference>
<dbReference type="GO" id="GO:0061157">
    <property type="term" value="P:mRNA destabilization"/>
    <property type="evidence" value="ECO:0000314"/>
    <property type="project" value="ARUK-UCL"/>
</dbReference>
<dbReference type="GO" id="GO:0006376">
    <property type="term" value="P:mRNA splice site recognition"/>
    <property type="evidence" value="ECO:0000266"/>
    <property type="project" value="RGD"/>
</dbReference>
<dbReference type="GO" id="GO:0008285">
    <property type="term" value="P:negative regulation of cell population proliferation"/>
    <property type="evidence" value="ECO:0000314"/>
    <property type="project" value="ARUK-UCL"/>
</dbReference>
<dbReference type="GO" id="GO:0050680">
    <property type="term" value="P:negative regulation of epithelial cell proliferation"/>
    <property type="evidence" value="ECO:0000315"/>
    <property type="project" value="RGD"/>
</dbReference>
<dbReference type="GO" id="GO:0010629">
    <property type="term" value="P:negative regulation of gene expression"/>
    <property type="evidence" value="ECO:0000266"/>
    <property type="project" value="RGD"/>
</dbReference>
<dbReference type="GO" id="GO:0010628">
    <property type="term" value="P:positive regulation of gene expression"/>
    <property type="evidence" value="ECO:0000314"/>
    <property type="project" value="ARUK-UCL"/>
</dbReference>
<dbReference type="GO" id="GO:0040018">
    <property type="term" value="P:positive regulation of multicellular organism growth"/>
    <property type="evidence" value="ECO:0000266"/>
    <property type="project" value="RGD"/>
</dbReference>
<dbReference type="GO" id="GO:0016441">
    <property type="term" value="P:post-transcriptional gene silencing"/>
    <property type="evidence" value="ECO:0000315"/>
    <property type="project" value="ARUK-UCL"/>
</dbReference>
<dbReference type="GO" id="GO:0000381">
    <property type="term" value="P:regulation of alternative mRNA splicing, via spliceosome"/>
    <property type="evidence" value="ECO:0000266"/>
    <property type="project" value="RGD"/>
</dbReference>
<dbReference type="GO" id="GO:0051726">
    <property type="term" value="P:regulation of cell cycle"/>
    <property type="evidence" value="ECO:0000314"/>
    <property type="project" value="ARUK-UCL"/>
</dbReference>
<dbReference type="GO" id="GO:0050727">
    <property type="term" value="P:regulation of inflammatory response"/>
    <property type="evidence" value="ECO:0000266"/>
    <property type="project" value="RGD"/>
</dbReference>
<dbReference type="GO" id="GO:0043484">
    <property type="term" value="P:regulation of RNA splicing"/>
    <property type="evidence" value="ECO:0000250"/>
    <property type="project" value="UniProtKB"/>
</dbReference>
<dbReference type="GO" id="GO:0007286">
    <property type="term" value="P:spermatid development"/>
    <property type="evidence" value="ECO:0000266"/>
    <property type="project" value="RGD"/>
</dbReference>
<dbReference type="CDD" id="cd12631">
    <property type="entry name" value="RRM1_CELF1_2_Bruno"/>
    <property type="match status" value="1"/>
</dbReference>
<dbReference type="CDD" id="cd12634">
    <property type="entry name" value="RRM2_CELF1_2"/>
    <property type="match status" value="1"/>
</dbReference>
<dbReference type="CDD" id="cd12638">
    <property type="entry name" value="RRM3_CELF1_2"/>
    <property type="match status" value="1"/>
</dbReference>
<dbReference type="FunFam" id="3.30.70.330:FF:000013">
    <property type="entry name" value="CUGBP Elav-like family member 1 isoform 2"/>
    <property type="match status" value="1"/>
</dbReference>
<dbReference type="FunFam" id="3.30.70.330:FF:000015">
    <property type="entry name" value="CUGBP Elav-like family member 1 isoform 2"/>
    <property type="match status" value="1"/>
</dbReference>
<dbReference type="FunFam" id="3.30.70.330:FF:000016">
    <property type="entry name" value="CUGBP Elav-like family member 1 isoform 2"/>
    <property type="match status" value="1"/>
</dbReference>
<dbReference type="Gene3D" id="3.30.70.330">
    <property type="match status" value="3"/>
</dbReference>
<dbReference type="InterPro" id="IPR034196">
    <property type="entry name" value="CELF1/2_RRM1"/>
</dbReference>
<dbReference type="InterPro" id="IPR034198">
    <property type="entry name" value="CELF1/2_RRM2"/>
</dbReference>
<dbReference type="InterPro" id="IPR034199">
    <property type="entry name" value="CELF1/2_RRM3"/>
</dbReference>
<dbReference type="InterPro" id="IPR012677">
    <property type="entry name" value="Nucleotide-bd_a/b_plait_sf"/>
</dbReference>
<dbReference type="InterPro" id="IPR035979">
    <property type="entry name" value="RBD_domain_sf"/>
</dbReference>
<dbReference type="InterPro" id="IPR000504">
    <property type="entry name" value="RRM_dom"/>
</dbReference>
<dbReference type="PANTHER" id="PTHR24012">
    <property type="entry name" value="RNA BINDING PROTEIN"/>
    <property type="match status" value="1"/>
</dbReference>
<dbReference type="Pfam" id="PF00076">
    <property type="entry name" value="RRM_1"/>
    <property type="match status" value="3"/>
</dbReference>
<dbReference type="SMART" id="SM00360">
    <property type="entry name" value="RRM"/>
    <property type="match status" value="3"/>
</dbReference>
<dbReference type="SUPFAM" id="SSF54928">
    <property type="entry name" value="RNA-binding domain, RBD"/>
    <property type="match status" value="2"/>
</dbReference>
<dbReference type="PROSITE" id="PS50102">
    <property type="entry name" value="RRM"/>
    <property type="match status" value="3"/>
</dbReference>
<comment type="function">
    <text evidence="2 3">RNA-binding protein implicated in the regulation of several post-transcriptional events. Involved in pre-mRNA alternative splicing, mRNA translation and stability. Mediates exon inclusion and/or exclusion in pre-mRNA that are subject to tissue-specific and developmentally regulated alternative splicing. Specifically activates exon 5 inclusion of cardiac isoforms of TNNT2 during heart remodeling at the juvenile to adult transition. Acts both as an activator and as a repressor of a pair of coregulated exons: promotes inclusion of the smooth muscle (SM) exon but exclusion of the non-muscle (NM) exon in actinin pre-mRNAs. Activates SM exon 5 inclusion by antagonizing the repressive effect of PTB. Promotes exclusion of exon 11 of the INSR pre-mRNA. Inhibits, together with HNRNPH1, insulin receptor (IR) pre-mRNA exon 11 inclusion in myoblast. Increases translation and controls the choice of translation initiation codon of CEBPB mRNA. Increases mRNA translation of CEBPB in aging liver. Increases translation of CDKN1A mRNA by antagonizing the repressive effect of CALR3. Mediates rapid cytoplasmic mRNA deadenylation. Recruits the deadenylase PARN to the poly(A) tail of EDEN-containing mRNAs to promote their deadenylation. Required for completion of spermatogenesis. Binds to (CUG)n triplet repeats in the 3'-UTR of transcripts such as DMPK and to Bruno response elements (BREs). Binds to muscle-specific splicing enhancer (MSE) intronic sites flanking the alternative exon 5 of TNNT2 pre-mRNA. Binds to AU-rich sequences (AREs or EDEN-like) localized in the 3'-UTR of JUN and FOS mRNAs. Binds to the IR RNA. Binds to the 5'-region of CDKN1A and CEBPB mRNAs. Binds with the 5'-region of CEBPB mRNA in aging liver (By similarity). May be a specific regulator of miRNA biogenesis. Binds to primary microRNA pri-MIR140 and, with CELF2, negatively regulates the processing to mature miRNA (By similarity).</text>
</comment>
<comment type="subunit">
    <text evidence="1">Interacts with HNRNPH1; the interaction in RNA-dependent. Interacts with PARN. Component of an EIF2 complex at least composed of CELF1/CUGBP1, CALR, CALR3, EIF2S1, EIF2S2, HSP90B1 and HSPA5 (By similarity). Associates with polysomes.</text>
</comment>
<comment type="subcellular location">
    <subcellularLocation>
        <location evidence="1">Nucleus</location>
    </subcellularLocation>
    <subcellularLocation>
        <location evidence="1">Cytoplasm</location>
    </subcellularLocation>
    <text evidence="1">RNA-binding activity is detected in both nuclear and cytoplasmic compartments.</text>
</comment>
<comment type="domain">
    <text evidence="1">RRM1 and RRM2 domains preferentially target UGU(U/G)-rich mRNA elements.</text>
</comment>
<comment type="similarity">
    <text evidence="6">Belongs to the CELF/BRUNOL family.</text>
</comment>
<proteinExistence type="evidence at transcript level"/>
<keyword id="KW-0007">Acetylation</keyword>
<keyword id="KW-0010">Activator</keyword>
<keyword id="KW-0963">Cytoplasm</keyword>
<keyword id="KW-1017">Isopeptide bond</keyword>
<keyword id="KW-0507">mRNA processing</keyword>
<keyword id="KW-0508">mRNA splicing</keyword>
<keyword id="KW-0539">Nucleus</keyword>
<keyword id="KW-0597">Phosphoprotein</keyword>
<keyword id="KW-1185">Reference proteome</keyword>
<keyword id="KW-0677">Repeat</keyword>
<keyword id="KW-0694">RNA-binding</keyword>
<keyword id="KW-0832">Ubl conjugation</keyword>
<name>CELF1_RAT</name>
<gene>
    <name type="primary">Celf1</name>
    <name type="synonym">Cugbp1</name>
</gene>
<reference key="1">
    <citation type="journal article" date="2004" name="Genome Res.">
        <title>The status, quality, and expansion of the NIH full-length cDNA project: the Mammalian Gene Collection (MGC).</title>
        <authorList>
            <consortium name="The MGC Project Team"/>
        </authorList>
    </citation>
    <scope>NUCLEOTIDE SEQUENCE [LARGE SCALE MRNA]</scope>
    <source>
        <tissue>Testis</tissue>
    </source>
</reference>
<reference key="2">
    <citation type="journal article" date="1999" name="Nucleic Acids Res.">
        <title>CUG repeat binding protein (CUGBP1) interacts with the 5' region of C/EBPbeta mRNA and regulates translation of C/EBPbeta isoforms.</title>
        <authorList>
            <person name="Timchenko N.A."/>
            <person name="Welm A.L."/>
            <person name="Lu X."/>
            <person name="Timchenko L.T."/>
        </authorList>
    </citation>
    <scope>ASSOCIATION WITH POLYSOMES</scope>
</reference>
<accession>Q4QQT3</accession>
<sequence length="487" mass="52205">MNGTLDHPDQPDLDAIKMFVGQVPRTWSEKDLRELFEQYGAVYEINILRDRSQNPPQSKGCCFVTFYTRKAALEAQNALHNMKVLPGMHHPIQMKPADSEKNNAVEDRKLFIGMISKKCTENDIRVMFSSFGQIEECRILRGPDGLSRGCAFVTFTTRTMAQTAIKAMHQAQTMEGCSSPMVVKFADTQKDKEQKRMAQQLQQQMQQISAASVWGNLAGLNTLGPQYLALYLQLLQQTANSGNLNTLSSLHPMGGLNAMQLQNLAALAAAASAAQNTPSGTNALTTSSSPLSVLTSSAGSSPSSSSSNSVNPIASLGALQTLAGATAGLNVGSLAGMAALNGGLGSSGLSNGTGSTMEALTQAYSGIQQYAAAALPTLYNQNLLTQQSIGAAGSQKEGPEGANLFIYHLPQEFGDQDLLQMFMPFGNVVSAKVFIDKQTNLSKCFGFVSYDNPVSAQAAIQSMNGFQIGMKRLKVQLKRSKNDSKPY</sequence>
<organism>
    <name type="scientific">Rattus norvegicus</name>
    <name type="common">Rat</name>
    <dbReference type="NCBI Taxonomy" id="10116"/>
    <lineage>
        <taxon>Eukaryota</taxon>
        <taxon>Metazoa</taxon>
        <taxon>Chordata</taxon>
        <taxon>Craniata</taxon>
        <taxon>Vertebrata</taxon>
        <taxon>Euteleostomi</taxon>
        <taxon>Mammalia</taxon>
        <taxon>Eutheria</taxon>
        <taxon>Euarchontoglires</taxon>
        <taxon>Glires</taxon>
        <taxon>Rodentia</taxon>
        <taxon>Myomorpha</taxon>
        <taxon>Muroidea</taxon>
        <taxon>Muridae</taxon>
        <taxon>Murinae</taxon>
        <taxon>Rattus</taxon>
    </lineage>
</organism>
<protein>
    <recommendedName>
        <fullName>CUGBP Elav-like family member 1</fullName>
        <shortName>CELF-1</shortName>
    </recommendedName>
    <alternativeName>
        <fullName>Bruno-like protein 2</fullName>
    </alternativeName>
    <alternativeName>
        <fullName>CUG triplet repeat RNA-binding protein 1</fullName>
        <shortName>CUG-BP1</shortName>
    </alternativeName>
    <alternativeName>
        <fullName>CUG-BP- and ETR-3-like factor 1</fullName>
    </alternativeName>
    <alternativeName>
        <fullName>RNA-binding protein BRUNOL-2</fullName>
    </alternativeName>
</protein>
<feature type="chain" id="PRO_0000295183" description="CUGBP Elav-like family member 1">
    <location>
        <begin position="1"/>
        <end position="487"/>
    </location>
</feature>
<feature type="domain" description="RRM 1" evidence="4">
    <location>
        <begin position="16"/>
        <end position="99"/>
    </location>
</feature>
<feature type="domain" description="RRM 2" evidence="4">
    <location>
        <begin position="108"/>
        <end position="188"/>
    </location>
</feature>
<feature type="domain" description="RRM 3" evidence="4">
    <location>
        <begin position="402"/>
        <end position="480"/>
    </location>
</feature>
<feature type="region of interest" description="Disordered" evidence="5">
    <location>
        <begin position="277"/>
        <end position="310"/>
    </location>
</feature>
<feature type="compositionally biased region" description="Low complexity" evidence="5">
    <location>
        <begin position="283"/>
        <end position="310"/>
    </location>
</feature>
<feature type="modified residue" description="N-acetylmethionine" evidence="3">
    <location>
        <position position="1"/>
    </location>
</feature>
<feature type="modified residue" description="Phosphothreonine" evidence="3">
    <location>
        <position position="4"/>
    </location>
</feature>
<feature type="modified residue" description="Phosphoserine" evidence="3">
    <location>
        <position position="179"/>
    </location>
</feature>
<feature type="modified residue" description="Phosphoserine" evidence="2">
    <location>
        <position position="303"/>
    </location>
</feature>
<feature type="cross-link" description="Glycyl lysine isopeptide (Lys-Gly) (interchain with G-Cter in SUMO2)" evidence="3">
    <location>
        <position position="109"/>
    </location>
</feature>